<comment type="similarity">
    <text evidence="2">Belongs to the UPF0758 family.</text>
</comment>
<comment type="sequence caution" evidence="2">
    <conflict type="erroneous initiation">
        <sequence resource="EMBL-CDS" id="AAF82961"/>
    </conflict>
</comment>
<feature type="chain" id="PRO_0000190756" description="UPF0758 protein XF_0148">
    <location>
        <begin position="1"/>
        <end position="224"/>
    </location>
</feature>
<feature type="domain" description="MPN" evidence="1">
    <location>
        <begin position="102"/>
        <end position="224"/>
    </location>
</feature>
<feature type="short sequence motif" description="JAMM motif" evidence="1">
    <location>
        <begin position="173"/>
        <end position="186"/>
    </location>
</feature>
<feature type="binding site" evidence="1">
    <location>
        <position position="173"/>
    </location>
    <ligand>
        <name>Zn(2+)</name>
        <dbReference type="ChEBI" id="CHEBI:29105"/>
        <note>catalytic</note>
    </ligand>
</feature>
<feature type="binding site" evidence="1">
    <location>
        <position position="175"/>
    </location>
    <ligand>
        <name>Zn(2+)</name>
        <dbReference type="ChEBI" id="CHEBI:29105"/>
        <note>catalytic</note>
    </ligand>
</feature>
<feature type="binding site" evidence="1">
    <location>
        <position position="186"/>
    </location>
    <ligand>
        <name>Zn(2+)</name>
        <dbReference type="ChEBI" id="CHEBI:29105"/>
        <note>catalytic</note>
    </ligand>
</feature>
<gene>
    <name type="ordered locus">XF_0148</name>
</gene>
<organism>
    <name type="scientific">Xylella fastidiosa (strain 9a5c)</name>
    <dbReference type="NCBI Taxonomy" id="160492"/>
    <lineage>
        <taxon>Bacteria</taxon>
        <taxon>Pseudomonadati</taxon>
        <taxon>Pseudomonadota</taxon>
        <taxon>Gammaproteobacteria</taxon>
        <taxon>Lysobacterales</taxon>
        <taxon>Lysobacteraceae</taxon>
        <taxon>Xylella</taxon>
    </lineage>
</organism>
<reference key="1">
    <citation type="journal article" date="2000" name="Nature">
        <title>The genome sequence of the plant pathogen Xylella fastidiosa.</title>
        <authorList>
            <person name="Simpson A.J.G."/>
            <person name="Reinach F.C."/>
            <person name="Arruda P."/>
            <person name="Abreu F.A."/>
            <person name="Acencio M."/>
            <person name="Alvarenga R."/>
            <person name="Alves L.M.C."/>
            <person name="Araya J.E."/>
            <person name="Baia G.S."/>
            <person name="Baptista C.S."/>
            <person name="Barros M.H."/>
            <person name="Bonaccorsi E.D."/>
            <person name="Bordin S."/>
            <person name="Bove J.M."/>
            <person name="Briones M.R.S."/>
            <person name="Bueno M.R.P."/>
            <person name="Camargo A.A."/>
            <person name="Camargo L.E.A."/>
            <person name="Carraro D.M."/>
            <person name="Carrer H."/>
            <person name="Colauto N.B."/>
            <person name="Colombo C."/>
            <person name="Costa F.F."/>
            <person name="Costa M.C.R."/>
            <person name="Costa-Neto C.M."/>
            <person name="Coutinho L.L."/>
            <person name="Cristofani M."/>
            <person name="Dias-Neto E."/>
            <person name="Docena C."/>
            <person name="El-Dorry H."/>
            <person name="Facincani A.P."/>
            <person name="Ferreira A.J.S."/>
            <person name="Ferreira V.C.A."/>
            <person name="Ferro J.A."/>
            <person name="Fraga J.S."/>
            <person name="Franca S.C."/>
            <person name="Franco M.C."/>
            <person name="Frohme M."/>
            <person name="Furlan L.R."/>
            <person name="Garnier M."/>
            <person name="Goldman G.H."/>
            <person name="Goldman M.H.S."/>
            <person name="Gomes S.L."/>
            <person name="Gruber A."/>
            <person name="Ho P.L."/>
            <person name="Hoheisel J.D."/>
            <person name="Junqueira M.L."/>
            <person name="Kemper E.L."/>
            <person name="Kitajima J.P."/>
            <person name="Krieger J.E."/>
            <person name="Kuramae E.E."/>
            <person name="Laigret F."/>
            <person name="Lambais M.R."/>
            <person name="Leite L.C.C."/>
            <person name="Lemos E.G.M."/>
            <person name="Lemos M.V.F."/>
            <person name="Lopes S.A."/>
            <person name="Lopes C.R."/>
            <person name="Machado J.A."/>
            <person name="Machado M.A."/>
            <person name="Madeira A.M.B.N."/>
            <person name="Madeira H.M.F."/>
            <person name="Marino C.L."/>
            <person name="Marques M.V."/>
            <person name="Martins E.A.L."/>
            <person name="Martins E.M.F."/>
            <person name="Matsukuma A.Y."/>
            <person name="Menck C.F.M."/>
            <person name="Miracca E.C."/>
            <person name="Miyaki C.Y."/>
            <person name="Monteiro-Vitorello C.B."/>
            <person name="Moon D.H."/>
            <person name="Nagai M.A."/>
            <person name="Nascimento A.L.T.O."/>
            <person name="Netto L.E.S."/>
            <person name="Nhani A. Jr."/>
            <person name="Nobrega F.G."/>
            <person name="Nunes L.R."/>
            <person name="Oliveira M.A."/>
            <person name="de Oliveira M.C."/>
            <person name="de Oliveira R.C."/>
            <person name="Palmieri D.A."/>
            <person name="Paris A."/>
            <person name="Peixoto B.R."/>
            <person name="Pereira G.A.G."/>
            <person name="Pereira H.A. Jr."/>
            <person name="Pesquero J.B."/>
            <person name="Quaggio R.B."/>
            <person name="Roberto P.G."/>
            <person name="Rodrigues V."/>
            <person name="de Rosa A.J.M."/>
            <person name="de Rosa V.E. Jr."/>
            <person name="de Sa R.G."/>
            <person name="Santelli R.V."/>
            <person name="Sawasaki H.E."/>
            <person name="da Silva A.C.R."/>
            <person name="da Silva A.M."/>
            <person name="da Silva F.R."/>
            <person name="Silva W.A. Jr."/>
            <person name="da Silveira J.F."/>
            <person name="Silvestri M.L.Z."/>
            <person name="Siqueira W.J."/>
            <person name="de Souza A.A."/>
            <person name="de Souza A.P."/>
            <person name="Terenzi M.F."/>
            <person name="Truffi D."/>
            <person name="Tsai S.M."/>
            <person name="Tsuhako M.H."/>
            <person name="Vallada H."/>
            <person name="Van Sluys M.A."/>
            <person name="Verjovski-Almeida S."/>
            <person name="Vettore A.L."/>
            <person name="Zago M.A."/>
            <person name="Zatz M."/>
            <person name="Meidanis J."/>
            <person name="Setubal J.C."/>
        </authorList>
    </citation>
    <scope>NUCLEOTIDE SEQUENCE [LARGE SCALE GENOMIC DNA]</scope>
    <source>
        <strain>9a5c</strain>
    </source>
</reference>
<evidence type="ECO:0000255" key="1">
    <source>
        <dbReference type="PROSITE-ProRule" id="PRU01182"/>
    </source>
</evidence>
<evidence type="ECO:0000305" key="2"/>
<proteinExistence type="inferred from homology"/>
<keyword id="KW-0378">Hydrolase</keyword>
<keyword id="KW-0479">Metal-binding</keyword>
<keyword id="KW-0482">Metalloprotease</keyword>
<keyword id="KW-0645">Protease</keyword>
<keyword id="KW-0862">Zinc</keyword>
<protein>
    <recommendedName>
        <fullName>UPF0758 protein XF_0148</fullName>
    </recommendedName>
</protein>
<accession>Q9PGZ8</accession>
<name>Y148_XYLFA</name>
<sequence length="224" mass="24618">MHINNWPTHERPREKLLAHGAATLSDAELLAIFLGSGLRGHDAVQTARNLLHTHGPLRELLDRPPGDLMRLPGLGLARACKLTAALELSTRHLAAALQRGASIHDPISAGRYFAQRLRANPNEVFAVLFLDNRHRAISFEELFHGTINGAEVHPREVVRRALTLNAAAVIVGHNHPSGNREPSPADRMITQRLKNALDLIDVRLVDHFVIGDGAPVSFAEHGWL</sequence>
<dbReference type="EMBL" id="AE003849">
    <property type="protein sequence ID" value="AAF82961.1"/>
    <property type="status" value="ALT_INIT"/>
    <property type="molecule type" value="Genomic_DNA"/>
</dbReference>
<dbReference type="PIR" id="G82842">
    <property type="entry name" value="G82842"/>
</dbReference>
<dbReference type="SMR" id="Q9PGZ8"/>
<dbReference type="STRING" id="160492.XF_0148"/>
<dbReference type="KEGG" id="xfa:XF_0148"/>
<dbReference type="eggNOG" id="COG2003">
    <property type="taxonomic scope" value="Bacteria"/>
</dbReference>
<dbReference type="HOGENOM" id="CLU_073529_0_1_6"/>
<dbReference type="Proteomes" id="UP000000812">
    <property type="component" value="Chromosome"/>
</dbReference>
<dbReference type="GO" id="GO:0046872">
    <property type="term" value="F:metal ion binding"/>
    <property type="evidence" value="ECO:0007669"/>
    <property type="project" value="UniProtKB-KW"/>
</dbReference>
<dbReference type="GO" id="GO:0008237">
    <property type="term" value="F:metallopeptidase activity"/>
    <property type="evidence" value="ECO:0007669"/>
    <property type="project" value="UniProtKB-KW"/>
</dbReference>
<dbReference type="GO" id="GO:0006508">
    <property type="term" value="P:proteolysis"/>
    <property type="evidence" value="ECO:0007669"/>
    <property type="project" value="UniProtKB-KW"/>
</dbReference>
<dbReference type="CDD" id="cd08071">
    <property type="entry name" value="MPN_DUF2466"/>
    <property type="match status" value="1"/>
</dbReference>
<dbReference type="Gene3D" id="3.40.140.10">
    <property type="entry name" value="Cytidine Deaminase, domain 2"/>
    <property type="match status" value="1"/>
</dbReference>
<dbReference type="InterPro" id="IPR037518">
    <property type="entry name" value="MPN"/>
</dbReference>
<dbReference type="InterPro" id="IPR025657">
    <property type="entry name" value="RadC_JAB"/>
</dbReference>
<dbReference type="InterPro" id="IPR010994">
    <property type="entry name" value="RuvA_2-like"/>
</dbReference>
<dbReference type="InterPro" id="IPR001405">
    <property type="entry name" value="UPF0758"/>
</dbReference>
<dbReference type="InterPro" id="IPR020891">
    <property type="entry name" value="UPF0758_CS"/>
</dbReference>
<dbReference type="InterPro" id="IPR046778">
    <property type="entry name" value="UPF0758_N"/>
</dbReference>
<dbReference type="NCBIfam" id="NF000642">
    <property type="entry name" value="PRK00024.1"/>
    <property type="match status" value="1"/>
</dbReference>
<dbReference type="NCBIfam" id="TIGR00608">
    <property type="entry name" value="radc"/>
    <property type="match status" value="1"/>
</dbReference>
<dbReference type="PANTHER" id="PTHR30471">
    <property type="entry name" value="DNA REPAIR PROTEIN RADC"/>
    <property type="match status" value="1"/>
</dbReference>
<dbReference type="PANTHER" id="PTHR30471:SF3">
    <property type="entry name" value="UPF0758 PROTEIN YEES-RELATED"/>
    <property type="match status" value="1"/>
</dbReference>
<dbReference type="Pfam" id="PF04002">
    <property type="entry name" value="RadC"/>
    <property type="match status" value="1"/>
</dbReference>
<dbReference type="Pfam" id="PF20582">
    <property type="entry name" value="UPF0758_N"/>
    <property type="match status" value="1"/>
</dbReference>
<dbReference type="SUPFAM" id="SSF47781">
    <property type="entry name" value="RuvA domain 2-like"/>
    <property type="match status" value="1"/>
</dbReference>
<dbReference type="PROSITE" id="PS50249">
    <property type="entry name" value="MPN"/>
    <property type="match status" value="1"/>
</dbReference>
<dbReference type="PROSITE" id="PS01302">
    <property type="entry name" value="UPF0758"/>
    <property type="match status" value="1"/>
</dbReference>